<dbReference type="EMBL" id="AB650500">
    <property type="protein sequence ID" value="BAM37959.1"/>
    <property type="molecule type" value="mRNA"/>
</dbReference>
<dbReference type="EMBL" id="BDGG01000001">
    <property type="protein sequence ID" value="GAU88204.1"/>
    <property type="molecule type" value="Genomic_DNA"/>
</dbReference>
<dbReference type="SMR" id="J7MDG6"/>
<dbReference type="OrthoDB" id="10057511at2759"/>
<dbReference type="Proteomes" id="UP000186922">
    <property type="component" value="Unassembled WGS sequence"/>
</dbReference>
<dbReference type="GO" id="GO:0005737">
    <property type="term" value="C:cytoplasm"/>
    <property type="evidence" value="ECO:0007669"/>
    <property type="project" value="UniProtKB-SubCell"/>
</dbReference>
<feature type="chain" id="PRO_0000440188" description="Cytosolic-abundant heat soluble protein 2">
    <location>
        <begin position="1"/>
        <end position="216"/>
    </location>
</feature>
<feature type="region of interest" description="Disordered" evidence="4">
    <location>
        <begin position="1"/>
        <end position="34"/>
    </location>
</feature>
<feature type="region of interest" description="Disordered" evidence="4">
    <location>
        <begin position="66"/>
        <end position="91"/>
    </location>
</feature>
<feature type="region of interest" description="CAHS motif 1" evidence="9">
    <location>
        <begin position="115"/>
        <end position="133"/>
    </location>
</feature>
<feature type="region of interest" description="CAHS motif 2" evidence="9">
    <location>
        <begin position="152"/>
        <end position="170"/>
    </location>
</feature>
<feature type="coiled-coil region" evidence="3">
    <location>
        <begin position="81"/>
        <end position="180"/>
    </location>
</feature>
<feature type="compositionally biased region" description="Polar residues" evidence="4">
    <location>
        <begin position="1"/>
        <end position="11"/>
    </location>
</feature>
<feature type="compositionally biased region" description="Basic and acidic residues" evidence="4">
    <location>
        <begin position="12"/>
        <end position="22"/>
    </location>
</feature>
<feature type="compositionally biased region" description="Polar residues" evidence="4">
    <location>
        <begin position="25"/>
        <end position="34"/>
    </location>
</feature>
<feature type="compositionally biased region" description="Polar residues" evidence="4">
    <location>
        <begin position="68"/>
        <end position="77"/>
    </location>
</feature>
<protein>
    <recommendedName>
        <fullName evidence="7">Cytosolic-abundant heat soluble protein 2</fullName>
        <shortName evidence="7">CAHS2</shortName>
    </recommendedName>
    <alternativeName>
        <fullName evidence="8">Tardigrade-specific intrinsically disordered protein CAHS2</fullName>
        <shortName evidence="8">TDP CAHS2</shortName>
    </alternativeName>
</protein>
<organism>
    <name type="scientific">Ramazzottius varieornatus</name>
    <name type="common">Water bear</name>
    <name type="synonym">Tardigrade</name>
    <dbReference type="NCBI Taxonomy" id="947166"/>
    <lineage>
        <taxon>Eukaryota</taxon>
        <taxon>Metazoa</taxon>
        <taxon>Ecdysozoa</taxon>
        <taxon>Tardigrada</taxon>
        <taxon>Eutardigrada</taxon>
        <taxon>Parachela</taxon>
        <taxon>Hypsibioidea</taxon>
        <taxon>Ramazzottiidae</taxon>
        <taxon>Ramazzottius</taxon>
    </lineage>
</organism>
<gene>
    <name evidence="7" type="primary">CAHS2</name>
    <name type="ORF">RvY_00946</name>
</gene>
<proteinExistence type="evidence at protein level"/>
<name>CAHS2_RAMVA</name>
<keyword id="KW-0175">Coiled coil</keyword>
<keyword id="KW-0963">Cytoplasm</keyword>
<keyword id="KW-1185">Reference proteome</keyword>
<keyword id="KW-0677">Repeat</keyword>
<keyword id="KW-0346">Stress response</keyword>
<reference key="1">
    <citation type="journal article" date="2012" name="PLoS ONE">
        <title>Two novel heat-soluble protein families abundantly expressed in an anhydrobiotic tardigrade.</title>
        <authorList>
            <person name="Yamaguchi A."/>
            <person name="Tanaka S."/>
            <person name="Yamaguchi S."/>
            <person name="Kuwahara H."/>
            <person name="Takamura C."/>
            <person name="Imajoh-Ohmi S."/>
            <person name="Horikawa D.D."/>
            <person name="Toyoda A."/>
            <person name="Katayama T."/>
            <person name="Arakawa K."/>
            <person name="Fujiyama A."/>
            <person name="Kubo T."/>
            <person name="Kunieda T."/>
        </authorList>
    </citation>
    <scope>NUCLEOTIDE SEQUENCE [MRNA]</scope>
    <scope>IDENTIFICATION BY MASS SPECTROMETRY</scope>
    <scope>DOMAIN</scope>
    <source>
        <strain>YOKOZUNA-1</strain>
    </source>
</reference>
<reference key="2">
    <citation type="journal article" date="2016" name="Nat. Commun.">
        <title>Extremotolerant tardigrade genome and improved radiotolerance of human cultured cells by tardigrade-unique protein.</title>
        <authorList>
            <person name="Hashimoto T."/>
            <person name="Horikawa D.D."/>
            <person name="Saito Y."/>
            <person name="Kuwahara H."/>
            <person name="Kozuka-Hata H."/>
            <person name="Shin-I T."/>
            <person name="Minakuchi Y."/>
            <person name="Ohishi K."/>
            <person name="Motoyama A."/>
            <person name="Aizu T."/>
            <person name="Enomoto A."/>
            <person name="Kondo K."/>
            <person name="Tanaka S."/>
            <person name="Hara Y."/>
            <person name="Koshikawa S."/>
            <person name="Sagara H."/>
            <person name="Miura T."/>
            <person name="Yokobori S."/>
            <person name="Miyagawa K."/>
            <person name="Suzuki Y."/>
            <person name="Kubo T."/>
            <person name="Oyama M."/>
            <person name="Kohara Y."/>
            <person name="Fujiyama A."/>
            <person name="Arakawa K."/>
            <person name="Katayama T."/>
            <person name="Toyoda A."/>
            <person name="Kunieda T."/>
        </authorList>
    </citation>
    <scope>NUCLEOTIDE SEQUENCE [LARGE SCALE GENOMIC DNA]</scope>
    <source>
        <strain>YOKOZUNA-1</strain>
    </source>
</reference>
<reference key="3">
    <citation type="journal article" date="2021" name="Mol. Cell">
        <title>Reconsidering the 'glass transition' hypothesis of intrinsically unstructured CAHS proteins in desiccation tolerance of tardigrades.</title>
        <authorList>
            <person name="Arakawa K."/>
            <person name="Numata K."/>
        </authorList>
    </citation>
    <scope>FUNCTION</scope>
</reference>
<accession>J7MDG6</accession>
<sequence length="216" mass="24587">MSRDQGSTEYDANQRQEQHQEQHNTSYTHTDVRTNIPNIPAPFISTGVSGLGQQLVGEGFTASAARISGQSSETHVQMTPEMEAEARKDRERYERELQAINERHQRDIEGKTEAYRKQAEQEAERLRKELEKQHQRDIEFRKSLVQGTIENQKRQVELEAQLAKRELDREARLATQALDQSKMATDVQVNFDSAVGHTVSGATTVSQSEKVTQSKH</sequence>
<comment type="function">
    <text evidence="5 6 10">CAHS proteins are cytosolic heat soluble proteins that seem to contribute to the anhydrobiosis in tardigrades, but their specific mechanisms are yet to be identified (PubMed:22937162, PubMed:33545053). It is possible that protection during anhydrobiosis might occur via the stabilization of vitrifying small molecules such as sugars, but not via the direct glass transition of CAHS proteins themselves (Probable).</text>
</comment>
<comment type="subcellular location">
    <subcellularLocation>
        <location evidence="1">Cytoplasm</location>
    </subcellularLocation>
</comment>
<comment type="domain">
    <text evidence="9">CAHS proteins contain 2 repeats of 19-mer peptides designated as CAHS-motifs that comprise each two octapeptides connected by a tripeptide (PubMed:27649274).</text>
</comment>
<comment type="miscellaneous">
    <text evidence="2">Trehalose, a disaccharide essential for several organisms to survive drying, is detected at low levels or not at all in some tardigrade species, indicating that tardigrades possess potentially novel mechanisms for surviving desiccation involving tardigrade-specific intrinsically disordered proteins (TDPs) (By similarity).</text>
</comment>
<comment type="similarity">
    <text evidence="8">Belongs to the Cytosolic-abundant heat soluble protein (CAHS) family.</text>
</comment>
<evidence type="ECO:0000250" key="1">
    <source>
        <dbReference type="UniProtKB" id="J7M3T1"/>
    </source>
</evidence>
<evidence type="ECO:0000250" key="2">
    <source>
        <dbReference type="UniProtKB" id="P0CU44"/>
    </source>
</evidence>
<evidence type="ECO:0000255" key="3"/>
<evidence type="ECO:0000256" key="4">
    <source>
        <dbReference type="SAM" id="MobiDB-lite"/>
    </source>
</evidence>
<evidence type="ECO:0000269" key="5">
    <source>
    </source>
</evidence>
<evidence type="ECO:0000269" key="6">
    <source>
    </source>
</evidence>
<evidence type="ECO:0000303" key="7">
    <source>
    </source>
</evidence>
<evidence type="ECO:0000305" key="8"/>
<evidence type="ECO:0000305" key="9">
    <source>
    </source>
</evidence>
<evidence type="ECO:0000305" key="10">
    <source>
    </source>
</evidence>